<gene>
    <name evidence="1" type="primary">rpoA</name>
    <name type="ordered locus">Mrad2831_2191</name>
</gene>
<name>RPOA_METRJ</name>
<comment type="function">
    <text evidence="1">DNA-dependent RNA polymerase catalyzes the transcription of DNA into RNA using the four ribonucleoside triphosphates as substrates.</text>
</comment>
<comment type="catalytic activity">
    <reaction evidence="1">
        <text>RNA(n) + a ribonucleoside 5'-triphosphate = RNA(n+1) + diphosphate</text>
        <dbReference type="Rhea" id="RHEA:21248"/>
        <dbReference type="Rhea" id="RHEA-COMP:14527"/>
        <dbReference type="Rhea" id="RHEA-COMP:17342"/>
        <dbReference type="ChEBI" id="CHEBI:33019"/>
        <dbReference type="ChEBI" id="CHEBI:61557"/>
        <dbReference type="ChEBI" id="CHEBI:140395"/>
        <dbReference type="EC" id="2.7.7.6"/>
    </reaction>
</comment>
<comment type="subunit">
    <text evidence="1">Homodimer. The RNAP catalytic core consists of 2 alpha, 1 beta, 1 beta' and 1 omega subunit. When a sigma factor is associated with the core the holoenzyme is formed, which can initiate transcription.</text>
</comment>
<comment type="domain">
    <text evidence="1">The N-terminal domain is essential for RNAP assembly and basal transcription, whereas the C-terminal domain is involved in interaction with transcriptional regulators and with upstream promoter elements.</text>
</comment>
<comment type="similarity">
    <text evidence="1">Belongs to the RNA polymerase alpha chain family.</text>
</comment>
<sequence>MVIQKNWQELIKPNKLQVTTGDDPKRVATVVAEPLERGFGTTLGNALRRVLLSSLQGAAVTSVQIDGVLHEFSSIPGVREDVTDIVLNIKTIAIRSQTDAPKRMTLRKTGPGLVTAGDIGTVGDIQILNPDLVICTLDDGAEIRMEFTVATGKGYVPAERNRPEDAPIGLIPVDSLFSPVTKVSYRVETTREGQDLDKDKLTMTVETNGAVSPEDALAYAARIIQDQLQVFVNFEDPRKEEAAPLAPQLPFNPALLKKVDELELSVRSANCLKNDNIVYIGDLIQKSEGEMLRTPNFGRKSLNEIKEVLAGMGLHLGMDIPGWPPENIEDLAKRFEEHY</sequence>
<reference key="1">
    <citation type="submission" date="2008-03" db="EMBL/GenBank/DDBJ databases">
        <title>Complete sequence of chromosome of Methylobacterium radiotolerans JCM 2831.</title>
        <authorList>
            <consortium name="US DOE Joint Genome Institute"/>
            <person name="Copeland A."/>
            <person name="Lucas S."/>
            <person name="Lapidus A."/>
            <person name="Glavina del Rio T."/>
            <person name="Dalin E."/>
            <person name="Tice H."/>
            <person name="Bruce D."/>
            <person name="Goodwin L."/>
            <person name="Pitluck S."/>
            <person name="Kiss H."/>
            <person name="Brettin T."/>
            <person name="Detter J.C."/>
            <person name="Han C."/>
            <person name="Kuske C.R."/>
            <person name="Schmutz J."/>
            <person name="Larimer F."/>
            <person name="Land M."/>
            <person name="Hauser L."/>
            <person name="Kyrpides N."/>
            <person name="Mikhailova N."/>
            <person name="Marx C.J."/>
            <person name="Richardson P."/>
        </authorList>
    </citation>
    <scope>NUCLEOTIDE SEQUENCE [LARGE SCALE GENOMIC DNA]</scope>
    <source>
        <strain>ATCC 27329 / DSM 1819 / JCM 2831 / NBRC 15690 / NCIMB 10815 / 0-1</strain>
    </source>
</reference>
<dbReference type="EC" id="2.7.7.6" evidence="1"/>
<dbReference type="EMBL" id="CP001001">
    <property type="protein sequence ID" value="ACB24186.1"/>
    <property type="molecule type" value="Genomic_DNA"/>
</dbReference>
<dbReference type="RefSeq" id="WP_010686165.1">
    <property type="nucleotide sequence ID" value="NC_010505.1"/>
</dbReference>
<dbReference type="SMR" id="B1LWP9"/>
<dbReference type="STRING" id="426355.Mrad2831_2191"/>
<dbReference type="KEGG" id="mrd:Mrad2831_2191"/>
<dbReference type="eggNOG" id="COG0202">
    <property type="taxonomic scope" value="Bacteria"/>
</dbReference>
<dbReference type="HOGENOM" id="CLU_053084_0_0_5"/>
<dbReference type="OrthoDB" id="9805706at2"/>
<dbReference type="Proteomes" id="UP000006589">
    <property type="component" value="Chromosome"/>
</dbReference>
<dbReference type="GO" id="GO:0005737">
    <property type="term" value="C:cytoplasm"/>
    <property type="evidence" value="ECO:0007669"/>
    <property type="project" value="UniProtKB-ARBA"/>
</dbReference>
<dbReference type="GO" id="GO:0000428">
    <property type="term" value="C:DNA-directed RNA polymerase complex"/>
    <property type="evidence" value="ECO:0007669"/>
    <property type="project" value="UniProtKB-KW"/>
</dbReference>
<dbReference type="GO" id="GO:0003677">
    <property type="term" value="F:DNA binding"/>
    <property type="evidence" value="ECO:0007669"/>
    <property type="project" value="UniProtKB-UniRule"/>
</dbReference>
<dbReference type="GO" id="GO:0003899">
    <property type="term" value="F:DNA-directed RNA polymerase activity"/>
    <property type="evidence" value="ECO:0007669"/>
    <property type="project" value="UniProtKB-UniRule"/>
</dbReference>
<dbReference type="GO" id="GO:0046983">
    <property type="term" value="F:protein dimerization activity"/>
    <property type="evidence" value="ECO:0007669"/>
    <property type="project" value="InterPro"/>
</dbReference>
<dbReference type="GO" id="GO:0006351">
    <property type="term" value="P:DNA-templated transcription"/>
    <property type="evidence" value="ECO:0007669"/>
    <property type="project" value="UniProtKB-UniRule"/>
</dbReference>
<dbReference type="CDD" id="cd06928">
    <property type="entry name" value="RNAP_alpha_NTD"/>
    <property type="match status" value="1"/>
</dbReference>
<dbReference type="FunFam" id="1.10.150.20:FF:000001">
    <property type="entry name" value="DNA-directed RNA polymerase subunit alpha"/>
    <property type="match status" value="1"/>
</dbReference>
<dbReference type="FunFam" id="2.170.120.12:FF:000001">
    <property type="entry name" value="DNA-directed RNA polymerase subunit alpha"/>
    <property type="match status" value="1"/>
</dbReference>
<dbReference type="Gene3D" id="1.10.150.20">
    <property type="entry name" value="5' to 3' exonuclease, C-terminal subdomain"/>
    <property type="match status" value="1"/>
</dbReference>
<dbReference type="Gene3D" id="2.170.120.12">
    <property type="entry name" value="DNA-directed RNA polymerase, insert domain"/>
    <property type="match status" value="1"/>
</dbReference>
<dbReference type="Gene3D" id="3.30.1360.10">
    <property type="entry name" value="RNA polymerase, RBP11-like subunit"/>
    <property type="match status" value="1"/>
</dbReference>
<dbReference type="HAMAP" id="MF_00059">
    <property type="entry name" value="RNApol_bact_RpoA"/>
    <property type="match status" value="1"/>
</dbReference>
<dbReference type="InterPro" id="IPR011262">
    <property type="entry name" value="DNA-dir_RNA_pol_insert"/>
</dbReference>
<dbReference type="InterPro" id="IPR011263">
    <property type="entry name" value="DNA-dir_RNA_pol_RpoA/D/Rpb3"/>
</dbReference>
<dbReference type="InterPro" id="IPR011773">
    <property type="entry name" value="DNA-dir_RpoA"/>
</dbReference>
<dbReference type="InterPro" id="IPR036603">
    <property type="entry name" value="RBP11-like"/>
</dbReference>
<dbReference type="InterPro" id="IPR011260">
    <property type="entry name" value="RNAP_asu_C"/>
</dbReference>
<dbReference type="InterPro" id="IPR036643">
    <property type="entry name" value="RNApol_insert_sf"/>
</dbReference>
<dbReference type="NCBIfam" id="NF003513">
    <property type="entry name" value="PRK05182.1-2"/>
    <property type="match status" value="1"/>
</dbReference>
<dbReference type="NCBIfam" id="NF003519">
    <property type="entry name" value="PRK05182.2-5"/>
    <property type="match status" value="1"/>
</dbReference>
<dbReference type="NCBIfam" id="TIGR02027">
    <property type="entry name" value="rpoA"/>
    <property type="match status" value="1"/>
</dbReference>
<dbReference type="Pfam" id="PF01000">
    <property type="entry name" value="RNA_pol_A_bac"/>
    <property type="match status" value="1"/>
</dbReference>
<dbReference type="Pfam" id="PF03118">
    <property type="entry name" value="RNA_pol_A_CTD"/>
    <property type="match status" value="1"/>
</dbReference>
<dbReference type="Pfam" id="PF01193">
    <property type="entry name" value="RNA_pol_L"/>
    <property type="match status" value="1"/>
</dbReference>
<dbReference type="SMART" id="SM00662">
    <property type="entry name" value="RPOLD"/>
    <property type="match status" value="1"/>
</dbReference>
<dbReference type="SUPFAM" id="SSF47789">
    <property type="entry name" value="C-terminal domain of RNA polymerase alpha subunit"/>
    <property type="match status" value="1"/>
</dbReference>
<dbReference type="SUPFAM" id="SSF56553">
    <property type="entry name" value="Insert subdomain of RNA polymerase alpha subunit"/>
    <property type="match status" value="1"/>
</dbReference>
<dbReference type="SUPFAM" id="SSF55257">
    <property type="entry name" value="RBP11-like subunits of RNA polymerase"/>
    <property type="match status" value="1"/>
</dbReference>
<evidence type="ECO:0000255" key="1">
    <source>
        <dbReference type="HAMAP-Rule" id="MF_00059"/>
    </source>
</evidence>
<proteinExistence type="inferred from homology"/>
<keyword id="KW-0240">DNA-directed RNA polymerase</keyword>
<keyword id="KW-0548">Nucleotidyltransferase</keyword>
<keyword id="KW-0804">Transcription</keyword>
<keyword id="KW-0808">Transferase</keyword>
<accession>B1LWP9</accession>
<protein>
    <recommendedName>
        <fullName evidence="1">DNA-directed RNA polymerase subunit alpha</fullName>
        <shortName evidence="1">RNAP subunit alpha</shortName>
        <ecNumber evidence="1">2.7.7.6</ecNumber>
    </recommendedName>
    <alternativeName>
        <fullName evidence="1">RNA polymerase subunit alpha</fullName>
    </alternativeName>
    <alternativeName>
        <fullName evidence="1">Transcriptase subunit alpha</fullName>
    </alternativeName>
</protein>
<organism>
    <name type="scientific">Methylobacterium radiotolerans (strain ATCC 27329 / DSM 1819 / JCM 2831 / NBRC 15690 / NCIMB 10815 / 0-1)</name>
    <dbReference type="NCBI Taxonomy" id="426355"/>
    <lineage>
        <taxon>Bacteria</taxon>
        <taxon>Pseudomonadati</taxon>
        <taxon>Pseudomonadota</taxon>
        <taxon>Alphaproteobacteria</taxon>
        <taxon>Hyphomicrobiales</taxon>
        <taxon>Methylobacteriaceae</taxon>
        <taxon>Methylobacterium</taxon>
    </lineage>
</organism>
<feature type="chain" id="PRO_1000196643" description="DNA-directed RNA polymerase subunit alpha">
    <location>
        <begin position="1"/>
        <end position="339"/>
    </location>
</feature>
<feature type="region of interest" description="Alpha N-terminal domain (alpha-NTD)" evidence="1">
    <location>
        <begin position="1"/>
        <end position="235"/>
    </location>
</feature>
<feature type="region of interest" description="Alpha C-terminal domain (alpha-CTD)" evidence="1">
    <location>
        <begin position="251"/>
        <end position="339"/>
    </location>
</feature>